<evidence type="ECO:0000250" key="1"/>
<evidence type="ECO:0000255" key="2">
    <source>
        <dbReference type="HAMAP-Rule" id="MF_00118"/>
    </source>
</evidence>
<protein>
    <recommendedName>
        <fullName evidence="2">Elongation factor Tu 1</fullName>
        <shortName evidence="2">EF-Tu 1</shortName>
        <ecNumber evidence="2">3.6.5.3</ecNumber>
    </recommendedName>
</protein>
<name>EFTU1_ECOL5</name>
<accession>Q0TCC0</accession>
<comment type="function">
    <text evidence="2">GTP hydrolase that promotes the GTP-dependent binding of aminoacyl-tRNA to the A-site of ribosomes during protein biosynthesis.</text>
</comment>
<comment type="catalytic activity">
    <reaction evidence="2">
        <text>GTP + H2O = GDP + phosphate + H(+)</text>
        <dbReference type="Rhea" id="RHEA:19669"/>
        <dbReference type="ChEBI" id="CHEBI:15377"/>
        <dbReference type="ChEBI" id="CHEBI:15378"/>
        <dbReference type="ChEBI" id="CHEBI:37565"/>
        <dbReference type="ChEBI" id="CHEBI:43474"/>
        <dbReference type="ChEBI" id="CHEBI:58189"/>
        <dbReference type="EC" id="3.6.5.3"/>
    </reaction>
    <physiologicalReaction direction="left-to-right" evidence="2">
        <dbReference type="Rhea" id="RHEA:19670"/>
    </physiologicalReaction>
</comment>
<comment type="subunit">
    <text evidence="2">Monomer.</text>
</comment>
<comment type="subcellular location">
    <subcellularLocation>
        <location evidence="2">Cytoplasm</location>
    </subcellularLocation>
</comment>
<comment type="similarity">
    <text evidence="2">Belongs to the TRAFAC class translation factor GTPase superfamily. Classic translation factor GTPase family. EF-Tu/EF-1A subfamily.</text>
</comment>
<feature type="chain" id="PRO_0000337390" description="Elongation factor Tu 1">
    <location>
        <begin position="1"/>
        <end position="394"/>
    </location>
</feature>
<feature type="domain" description="tr-type G">
    <location>
        <begin position="10"/>
        <end position="204"/>
    </location>
</feature>
<feature type="region of interest" description="G1" evidence="1">
    <location>
        <begin position="19"/>
        <end position="26"/>
    </location>
</feature>
<feature type="region of interest" description="G2" evidence="1">
    <location>
        <begin position="60"/>
        <end position="64"/>
    </location>
</feature>
<feature type="region of interest" description="G3" evidence="1">
    <location>
        <begin position="81"/>
        <end position="84"/>
    </location>
</feature>
<feature type="region of interest" description="G4" evidence="1">
    <location>
        <begin position="136"/>
        <end position="139"/>
    </location>
</feature>
<feature type="region of interest" description="G5" evidence="1">
    <location>
        <begin position="174"/>
        <end position="176"/>
    </location>
</feature>
<feature type="binding site" evidence="2">
    <location>
        <begin position="19"/>
        <end position="26"/>
    </location>
    <ligand>
        <name>GTP</name>
        <dbReference type="ChEBI" id="CHEBI:37565"/>
    </ligand>
</feature>
<feature type="binding site" evidence="2">
    <location>
        <position position="26"/>
    </location>
    <ligand>
        <name>Mg(2+)</name>
        <dbReference type="ChEBI" id="CHEBI:18420"/>
    </ligand>
</feature>
<feature type="binding site" evidence="2">
    <location>
        <begin position="81"/>
        <end position="85"/>
    </location>
    <ligand>
        <name>GTP</name>
        <dbReference type="ChEBI" id="CHEBI:37565"/>
    </ligand>
</feature>
<feature type="binding site" evidence="2">
    <location>
        <begin position="136"/>
        <end position="139"/>
    </location>
    <ligand>
        <name>GTP</name>
        <dbReference type="ChEBI" id="CHEBI:37565"/>
    </ligand>
</feature>
<keyword id="KW-0963">Cytoplasm</keyword>
<keyword id="KW-0251">Elongation factor</keyword>
<keyword id="KW-0342">GTP-binding</keyword>
<keyword id="KW-0378">Hydrolase</keyword>
<keyword id="KW-0460">Magnesium</keyword>
<keyword id="KW-0479">Metal-binding</keyword>
<keyword id="KW-0547">Nucleotide-binding</keyword>
<keyword id="KW-0648">Protein biosynthesis</keyword>
<dbReference type="EC" id="3.6.5.3" evidence="2"/>
<dbReference type="EMBL" id="CP000247">
    <property type="protein sequence ID" value="ABG71409.1"/>
    <property type="molecule type" value="Genomic_DNA"/>
</dbReference>
<dbReference type="SMR" id="Q0TCC0"/>
<dbReference type="KEGG" id="ecp:ECP_3429"/>
<dbReference type="HOGENOM" id="CLU_007265_0_2_6"/>
<dbReference type="Proteomes" id="UP000009182">
    <property type="component" value="Chromosome"/>
</dbReference>
<dbReference type="GO" id="GO:0005829">
    <property type="term" value="C:cytosol"/>
    <property type="evidence" value="ECO:0007669"/>
    <property type="project" value="TreeGrafter"/>
</dbReference>
<dbReference type="GO" id="GO:0005525">
    <property type="term" value="F:GTP binding"/>
    <property type="evidence" value="ECO:0007669"/>
    <property type="project" value="UniProtKB-UniRule"/>
</dbReference>
<dbReference type="GO" id="GO:0003924">
    <property type="term" value="F:GTPase activity"/>
    <property type="evidence" value="ECO:0007669"/>
    <property type="project" value="InterPro"/>
</dbReference>
<dbReference type="GO" id="GO:0097216">
    <property type="term" value="F:guanosine tetraphosphate binding"/>
    <property type="evidence" value="ECO:0007669"/>
    <property type="project" value="UniProtKB-ARBA"/>
</dbReference>
<dbReference type="GO" id="GO:0003746">
    <property type="term" value="F:translation elongation factor activity"/>
    <property type="evidence" value="ECO:0007669"/>
    <property type="project" value="UniProtKB-UniRule"/>
</dbReference>
<dbReference type="CDD" id="cd01884">
    <property type="entry name" value="EF_Tu"/>
    <property type="match status" value="1"/>
</dbReference>
<dbReference type="CDD" id="cd03697">
    <property type="entry name" value="EFTU_II"/>
    <property type="match status" value="1"/>
</dbReference>
<dbReference type="CDD" id="cd03707">
    <property type="entry name" value="EFTU_III"/>
    <property type="match status" value="1"/>
</dbReference>
<dbReference type="FunFam" id="2.40.30.10:FF:000001">
    <property type="entry name" value="Elongation factor Tu"/>
    <property type="match status" value="1"/>
</dbReference>
<dbReference type="FunFam" id="3.40.50.300:FF:000003">
    <property type="entry name" value="Elongation factor Tu"/>
    <property type="match status" value="1"/>
</dbReference>
<dbReference type="Gene3D" id="3.40.50.300">
    <property type="entry name" value="P-loop containing nucleotide triphosphate hydrolases"/>
    <property type="match status" value="1"/>
</dbReference>
<dbReference type="Gene3D" id="2.40.30.10">
    <property type="entry name" value="Translation factors"/>
    <property type="match status" value="2"/>
</dbReference>
<dbReference type="HAMAP" id="MF_00118_B">
    <property type="entry name" value="EF_Tu_B"/>
    <property type="match status" value="1"/>
</dbReference>
<dbReference type="InterPro" id="IPR041709">
    <property type="entry name" value="EF-Tu_GTP-bd"/>
</dbReference>
<dbReference type="InterPro" id="IPR050055">
    <property type="entry name" value="EF-Tu_GTPase"/>
</dbReference>
<dbReference type="InterPro" id="IPR004161">
    <property type="entry name" value="EFTu-like_2"/>
</dbReference>
<dbReference type="InterPro" id="IPR033720">
    <property type="entry name" value="EFTU_2"/>
</dbReference>
<dbReference type="InterPro" id="IPR031157">
    <property type="entry name" value="G_TR_CS"/>
</dbReference>
<dbReference type="InterPro" id="IPR027417">
    <property type="entry name" value="P-loop_NTPase"/>
</dbReference>
<dbReference type="InterPro" id="IPR005225">
    <property type="entry name" value="Small_GTP-bd"/>
</dbReference>
<dbReference type="InterPro" id="IPR000795">
    <property type="entry name" value="T_Tr_GTP-bd_dom"/>
</dbReference>
<dbReference type="InterPro" id="IPR009000">
    <property type="entry name" value="Transl_B-barrel_sf"/>
</dbReference>
<dbReference type="InterPro" id="IPR009001">
    <property type="entry name" value="Transl_elong_EF1A/Init_IF2_C"/>
</dbReference>
<dbReference type="InterPro" id="IPR004541">
    <property type="entry name" value="Transl_elong_EFTu/EF1A_bac/org"/>
</dbReference>
<dbReference type="InterPro" id="IPR004160">
    <property type="entry name" value="Transl_elong_EFTu/EF1A_C"/>
</dbReference>
<dbReference type="NCBIfam" id="TIGR00485">
    <property type="entry name" value="EF-Tu"/>
    <property type="match status" value="1"/>
</dbReference>
<dbReference type="NCBIfam" id="NF000766">
    <property type="entry name" value="PRK00049.1"/>
    <property type="match status" value="1"/>
</dbReference>
<dbReference type="NCBIfam" id="NF009372">
    <property type="entry name" value="PRK12735.1"/>
    <property type="match status" value="1"/>
</dbReference>
<dbReference type="NCBIfam" id="NF009373">
    <property type="entry name" value="PRK12736.1"/>
    <property type="match status" value="1"/>
</dbReference>
<dbReference type="NCBIfam" id="TIGR00231">
    <property type="entry name" value="small_GTP"/>
    <property type="match status" value="1"/>
</dbReference>
<dbReference type="PANTHER" id="PTHR43721:SF22">
    <property type="entry name" value="ELONGATION FACTOR TU, MITOCHONDRIAL"/>
    <property type="match status" value="1"/>
</dbReference>
<dbReference type="PANTHER" id="PTHR43721">
    <property type="entry name" value="ELONGATION FACTOR TU-RELATED"/>
    <property type="match status" value="1"/>
</dbReference>
<dbReference type="Pfam" id="PF00009">
    <property type="entry name" value="GTP_EFTU"/>
    <property type="match status" value="1"/>
</dbReference>
<dbReference type="Pfam" id="PF03144">
    <property type="entry name" value="GTP_EFTU_D2"/>
    <property type="match status" value="1"/>
</dbReference>
<dbReference type="Pfam" id="PF03143">
    <property type="entry name" value="GTP_EFTU_D3"/>
    <property type="match status" value="1"/>
</dbReference>
<dbReference type="PRINTS" id="PR00315">
    <property type="entry name" value="ELONGATNFCT"/>
</dbReference>
<dbReference type="SUPFAM" id="SSF50465">
    <property type="entry name" value="EF-Tu/eEF-1alpha/eIF2-gamma C-terminal domain"/>
    <property type="match status" value="1"/>
</dbReference>
<dbReference type="SUPFAM" id="SSF52540">
    <property type="entry name" value="P-loop containing nucleoside triphosphate hydrolases"/>
    <property type="match status" value="1"/>
</dbReference>
<dbReference type="SUPFAM" id="SSF50447">
    <property type="entry name" value="Translation proteins"/>
    <property type="match status" value="1"/>
</dbReference>
<dbReference type="PROSITE" id="PS00301">
    <property type="entry name" value="G_TR_1"/>
    <property type="match status" value="1"/>
</dbReference>
<dbReference type="PROSITE" id="PS51722">
    <property type="entry name" value="G_TR_2"/>
    <property type="match status" value="1"/>
</dbReference>
<gene>
    <name evidence="2" type="primary">tuf1</name>
    <name type="ordered locus">ECP_3429</name>
</gene>
<sequence length="394" mass="43284">MSKEKFERTKPHVNVGTIGHVDHGKTTLTAAITTVLAKTYGGAARAFDQIDNAPEEKARGITINTSHVEYDTPTRHYAHVDCPGHADYVKNMITGAAQMDGAILVVAATDGPMPQTREHILLGRQVGVPYIIVFLNKCDMVDDEELLELVEMEVRELLSQYDFPGDDTPIVRGSALKALEGDAEWEAKILELAGFLDSYIPEPERAIDKPFLLPIEDVFSISGRGTVVTGRVERGIIKVGEEVEIVGIKETQKSTCTGVEMFRKLLDEGRAGENVGVLLRGIKREEIERGQVLAKPGTIKPHTKFESEVYILSKDEGGRHTPFFKGYRPQFYFRTTDVTGTIELPEGVEMVMPGDNIKMVVTLIHPIAMDDGLRFAIREGGRTVGAGVVAKVLG</sequence>
<organism>
    <name type="scientific">Escherichia coli O6:K15:H31 (strain 536 / UPEC)</name>
    <dbReference type="NCBI Taxonomy" id="362663"/>
    <lineage>
        <taxon>Bacteria</taxon>
        <taxon>Pseudomonadati</taxon>
        <taxon>Pseudomonadota</taxon>
        <taxon>Gammaproteobacteria</taxon>
        <taxon>Enterobacterales</taxon>
        <taxon>Enterobacteriaceae</taxon>
        <taxon>Escherichia</taxon>
    </lineage>
</organism>
<proteinExistence type="inferred from homology"/>
<reference key="1">
    <citation type="journal article" date="2006" name="Mol. Microbiol.">
        <title>Role of pathogenicity island-associated integrases in the genome plasticity of uropathogenic Escherichia coli strain 536.</title>
        <authorList>
            <person name="Hochhut B."/>
            <person name="Wilde C."/>
            <person name="Balling G."/>
            <person name="Middendorf B."/>
            <person name="Dobrindt U."/>
            <person name="Brzuszkiewicz E."/>
            <person name="Gottschalk G."/>
            <person name="Carniel E."/>
            <person name="Hacker J."/>
        </authorList>
    </citation>
    <scope>NUCLEOTIDE SEQUENCE [LARGE SCALE GENOMIC DNA]</scope>
    <source>
        <strain>536 / UPEC</strain>
    </source>
</reference>